<name>BIOP_PSEAE</name>
<protein>
    <recommendedName>
        <fullName evidence="1">Probable biotin transporter</fullName>
    </recommendedName>
</protein>
<keyword id="KW-0997">Cell inner membrane</keyword>
<keyword id="KW-1003">Cell membrane</keyword>
<keyword id="KW-0472">Membrane</keyword>
<keyword id="KW-1185">Reference proteome</keyword>
<keyword id="KW-0677">Repeat</keyword>
<keyword id="KW-0812">Transmembrane</keyword>
<keyword id="KW-1133">Transmembrane helix</keyword>
<keyword id="KW-0813">Transport</keyword>
<organism>
    <name type="scientific">Pseudomonas aeruginosa (strain ATCC 15692 / DSM 22644 / CIP 104116 / JCM 14847 / LMG 12228 / 1C / PRS 101 / PAO1)</name>
    <dbReference type="NCBI Taxonomy" id="208964"/>
    <lineage>
        <taxon>Bacteria</taxon>
        <taxon>Pseudomonadati</taxon>
        <taxon>Pseudomonadota</taxon>
        <taxon>Gammaproteobacteria</taxon>
        <taxon>Pseudomonadales</taxon>
        <taxon>Pseudomonadaceae</taxon>
        <taxon>Pseudomonas</taxon>
    </lineage>
</organism>
<reference key="1">
    <citation type="submission" date="1998-03" db="EMBL/GenBank/DDBJ databases">
        <authorList>
            <person name="Xie G."/>
            <person name="Jensen R.A."/>
        </authorList>
    </citation>
    <scope>NUCLEOTIDE SEQUENCE [GENOMIC DNA]</scope>
    <source>
        <strain>ATCC 15692 / DSM 22644 / CIP 104116 / JCM 14847 / LMG 12228 / 1C / PRS 101 / PAO1</strain>
    </source>
</reference>
<reference key="2">
    <citation type="journal article" date="2000" name="Nature">
        <title>Complete genome sequence of Pseudomonas aeruginosa PAO1, an opportunistic pathogen.</title>
        <authorList>
            <person name="Stover C.K."/>
            <person name="Pham X.-Q.T."/>
            <person name="Erwin A.L."/>
            <person name="Mizoguchi S.D."/>
            <person name="Warrener P."/>
            <person name="Hickey M.J."/>
            <person name="Brinkman F.S.L."/>
            <person name="Hufnagle W.O."/>
            <person name="Kowalik D.J."/>
            <person name="Lagrou M."/>
            <person name="Garber R.L."/>
            <person name="Goltry L."/>
            <person name="Tolentino E."/>
            <person name="Westbrock-Wadman S."/>
            <person name="Yuan Y."/>
            <person name="Brody L.L."/>
            <person name="Coulter S.N."/>
            <person name="Folger K.R."/>
            <person name="Kas A."/>
            <person name="Larbig K."/>
            <person name="Lim R.M."/>
            <person name="Smith K.A."/>
            <person name="Spencer D.H."/>
            <person name="Wong G.K.-S."/>
            <person name="Wu Z."/>
            <person name="Paulsen I.T."/>
            <person name="Reizer J."/>
            <person name="Saier M.H. Jr."/>
            <person name="Hancock R.E.W."/>
            <person name="Lory S."/>
            <person name="Olson M.V."/>
        </authorList>
    </citation>
    <scope>NUCLEOTIDE SEQUENCE [LARGE SCALE GENOMIC DNA]</scope>
    <source>
        <strain>ATCC 15692 / DSM 22644 / CIP 104116 / JCM 14847 / LMG 12228 / 1C / PRS 101 / PAO1</strain>
    </source>
</reference>
<feature type="chain" id="PRO_0000169667" description="Probable biotin transporter">
    <location>
        <begin position="1"/>
        <end position="286"/>
    </location>
</feature>
<feature type="transmembrane region" description="Helical" evidence="2">
    <location>
        <begin position="4"/>
        <end position="24"/>
    </location>
</feature>
<feature type="transmembrane region" description="Helical" evidence="2">
    <location>
        <begin position="26"/>
        <end position="46"/>
    </location>
</feature>
<feature type="transmembrane region" description="Helical" evidence="2">
    <location>
        <begin position="56"/>
        <end position="76"/>
    </location>
</feature>
<feature type="transmembrane region" description="Helical" evidence="2">
    <location>
        <begin position="81"/>
        <end position="101"/>
    </location>
</feature>
<feature type="transmembrane region" description="Helical" evidence="2">
    <location>
        <begin position="109"/>
        <end position="129"/>
    </location>
</feature>
<feature type="transmembrane region" description="Helical" evidence="2">
    <location>
        <begin position="136"/>
        <end position="156"/>
    </location>
</feature>
<feature type="transmembrane region" description="Helical" evidence="2">
    <location>
        <begin position="174"/>
        <end position="194"/>
    </location>
</feature>
<feature type="transmembrane region" description="Helical" evidence="2">
    <location>
        <begin position="203"/>
        <end position="223"/>
    </location>
</feature>
<feature type="transmembrane region" description="Helical" evidence="2">
    <location>
        <begin position="234"/>
        <end position="254"/>
    </location>
</feature>
<feature type="transmembrane region" description="Helical" evidence="2">
    <location>
        <begin position="258"/>
        <end position="280"/>
    </location>
</feature>
<feature type="domain" description="EamA 1" evidence="2">
    <location>
        <begin position="3"/>
        <end position="128"/>
    </location>
</feature>
<feature type="domain" description="EamA 2" evidence="2">
    <location>
        <begin position="139"/>
        <end position="277"/>
    </location>
</feature>
<feature type="sequence conflict" description="In Ref. 1; AAC08597." evidence="3" ref="1">
    <original>D</original>
    <variation>G</variation>
    <location>
        <position position="27"/>
    </location>
</feature>
<feature type="sequence conflict" description="In Ref. 1; AAC08597." evidence="3" ref="1">
    <original>R</original>
    <variation>P</variation>
    <location>
        <position position="35"/>
    </location>
</feature>
<feature type="sequence conflict" description="In Ref. 1; AAC08597." evidence="3" ref="1">
    <original>A</original>
    <variation>V</variation>
    <location>
        <position position="236"/>
    </location>
</feature>
<feature type="sequence conflict" description="In Ref. 1; AAC08597." evidence="3" ref="1">
    <original>N</original>
    <variation>Y</variation>
    <location>
        <position position="255"/>
    </location>
</feature>
<feature type="sequence conflict" description="In Ref. 1; AAC08597." evidence="3" ref="1">
    <original>P</original>
    <variation>L</variation>
    <location>
        <position position="261"/>
    </location>
</feature>
<feature type="sequence conflict" description="In Ref. 1; AAC08597." evidence="3" ref="1">
    <original>A</original>
    <variation>V</variation>
    <location>
        <position position="264"/>
    </location>
</feature>
<feature type="sequence conflict" description="In Ref. 1; AAC08597." evidence="3" ref="1">
    <original>R</original>
    <variation>G</variation>
    <location>
        <position position="282"/>
    </location>
</feature>
<sequence length="286" mass="31835">MRYLLFVTVLWAFSFNLIGEYLAGQVDSYFAVLTRVLLAGLVFLPLTRWRGVEPRFVGGVMLVGALQFGITYVCLYLSFNVLTVPEVLLFTVLTPVHVALFDDLLNRRFNFWALAAALVAVLGAAIIRYDGITGEFLQGFLLLQLANATFAAGQVLYKRLVRKYPSELPQRQRFGYFFVGALLVALPAWLLFGDPQRLPAGELQWGVLVWMGLLATALGQFWWNKGATEVDAGTLAVMNNLHVPVGLLLNLLIWNQHADLPRLALGGAVIVASLWVNRLGRREVRA</sequence>
<accession>O68826</accession>
<evidence type="ECO:0000250" key="1">
    <source>
        <dbReference type="UniProtKB" id="P0ADP5"/>
    </source>
</evidence>
<evidence type="ECO:0000255" key="2"/>
<evidence type="ECO:0000305" key="3"/>
<dbReference type="EMBL" id="AF054868">
    <property type="protein sequence ID" value="AAC08597.1"/>
    <property type="molecule type" value="Genomic_DNA"/>
</dbReference>
<dbReference type="EMBL" id="AE004091">
    <property type="protein sequence ID" value="AAG06862.1"/>
    <property type="molecule type" value="Genomic_DNA"/>
</dbReference>
<dbReference type="PIR" id="G83211">
    <property type="entry name" value="G83211"/>
</dbReference>
<dbReference type="RefSeq" id="NP_252164.1">
    <property type="nucleotide sequence ID" value="NC_002516.2"/>
</dbReference>
<dbReference type="RefSeq" id="WP_003092000.1">
    <property type="nucleotide sequence ID" value="NZ_QZGE01000039.1"/>
</dbReference>
<dbReference type="SMR" id="O68826"/>
<dbReference type="FunCoup" id="O68826">
    <property type="interactions" value="22"/>
</dbReference>
<dbReference type="STRING" id="208964.PA3474"/>
<dbReference type="PaxDb" id="208964-PA3474"/>
<dbReference type="DNASU" id="878975"/>
<dbReference type="GeneID" id="878975"/>
<dbReference type="KEGG" id="pae:PA3474"/>
<dbReference type="PATRIC" id="fig|208964.12.peg.3637"/>
<dbReference type="PseudoCAP" id="PA3474"/>
<dbReference type="HOGENOM" id="CLU_085269_0_0_6"/>
<dbReference type="InParanoid" id="O68826"/>
<dbReference type="OrthoDB" id="1412048at2"/>
<dbReference type="PhylomeDB" id="O68826"/>
<dbReference type="BioCyc" id="PAER208964:G1FZ6-3542-MONOMER"/>
<dbReference type="Proteomes" id="UP000002438">
    <property type="component" value="Chromosome"/>
</dbReference>
<dbReference type="GO" id="GO:0016020">
    <property type="term" value="C:membrane"/>
    <property type="evidence" value="ECO:0000318"/>
    <property type="project" value="GO_Central"/>
</dbReference>
<dbReference type="GO" id="GO:0005886">
    <property type="term" value="C:plasma membrane"/>
    <property type="evidence" value="ECO:0007669"/>
    <property type="project" value="UniProtKB-SubCell"/>
</dbReference>
<dbReference type="InterPro" id="IPR004779">
    <property type="entry name" value="CO/AA/NH_transpt"/>
</dbReference>
<dbReference type="InterPro" id="IPR000620">
    <property type="entry name" value="EamA_dom"/>
</dbReference>
<dbReference type="NCBIfam" id="TIGR00950">
    <property type="entry name" value="2A78"/>
    <property type="match status" value="1"/>
</dbReference>
<dbReference type="PANTHER" id="PTHR22911">
    <property type="entry name" value="ACYL-MALONYL CONDENSING ENZYME-RELATED"/>
    <property type="match status" value="1"/>
</dbReference>
<dbReference type="PANTHER" id="PTHR22911:SF130">
    <property type="entry name" value="BIOTIN TRANSPORTER"/>
    <property type="match status" value="1"/>
</dbReference>
<dbReference type="Pfam" id="PF00892">
    <property type="entry name" value="EamA"/>
    <property type="match status" value="2"/>
</dbReference>
<dbReference type="SUPFAM" id="SSF103481">
    <property type="entry name" value="Multidrug resistance efflux transporter EmrE"/>
    <property type="match status" value="2"/>
</dbReference>
<comment type="function">
    <text evidence="1">Uptake of biotin.</text>
</comment>
<comment type="catalytic activity">
    <reaction evidence="1">
        <text>biotin(in) = biotin(out)</text>
        <dbReference type="Rhea" id="RHEA:28458"/>
        <dbReference type="ChEBI" id="CHEBI:57586"/>
    </reaction>
    <physiologicalReaction direction="right-to-left" evidence="1">
        <dbReference type="Rhea" id="RHEA:28460"/>
    </physiologicalReaction>
</comment>
<comment type="subcellular location">
    <subcellularLocation>
        <location evidence="1">Cell inner membrane</location>
        <topology evidence="2">Multi-pass membrane protein</topology>
    </subcellularLocation>
</comment>
<comment type="similarity">
    <text evidence="3">Belongs to the drug/metabolite transporter (DMT) superfamily. 10 TMS drug/metabolite exporter (DME) (TC 2.A.7.3) family.</text>
</comment>
<gene>
    <name type="ordered locus">PA3474</name>
</gene>
<proteinExistence type="inferred from homology"/>